<protein>
    <recommendedName>
        <fullName>Long neurotoxin 20</fullName>
        <shortName>LNTX-20</shortName>
    </recommendedName>
    <alternativeName>
        <fullName>Long neurotoxin 193R</fullName>
    </alternativeName>
</protein>
<sequence length="88" mass="9611">MKTLLLTLVVVTIVCLDLGNSFSCYKTPYVKSEPCAPGENLCYTKSWCDRFCSIRGKVIELGCAATCPPAEPKKDITCCSTDNCNTHP</sequence>
<proteinExistence type="evidence at protein level"/>
<name>3L220_DRYCN</name>
<keyword id="KW-0008">Acetylcholine receptor inhibiting toxin</keyword>
<keyword id="KW-1015">Disulfide bond</keyword>
<keyword id="KW-0872">Ion channel impairing toxin</keyword>
<keyword id="KW-0528">Neurotoxin</keyword>
<keyword id="KW-0629">Postsynaptic neurotoxin</keyword>
<keyword id="KW-0964">Secreted</keyword>
<keyword id="KW-0732">Signal</keyword>
<keyword id="KW-0800">Toxin</keyword>
<accession>F8J2F2</accession>
<dbReference type="EMBL" id="FJ752462">
    <property type="protein sequence ID" value="ACR78484.1"/>
    <property type="molecule type" value="mRNA"/>
</dbReference>
<dbReference type="EMBL" id="FJ752470">
    <property type="protein sequence ID" value="ACR78492.1"/>
    <property type="molecule type" value="mRNA"/>
</dbReference>
<dbReference type="SMR" id="F8J2F2"/>
<dbReference type="GO" id="GO:0005576">
    <property type="term" value="C:extracellular region"/>
    <property type="evidence" value="ECO:0007669"/>
    <property type="project" value="UniProtKB-SubCell"/>
</dbReference>
<dbReference type="GO" id="GO:0030550">
    <property type="term" value="F:acetylcholine receptor inhibitor activity"/>
    <property type="evidence" value="ECO:0007669"/>
    <property type="project" value="UniProtKB-KW"/>
</dbReference>
<dbReference type="GO" id="GO:0099106">
    <property type="term" value="F:ion channel regulator activity"/>
    <property type="evidence" value="ECO:0007669"/>
    <property type="project" value="UniProtKB-KW"/>
</dbReference>
<dbReference type="GO" id="GO:0090729">
    <property type="term" value="F:toxin activity"/>
    <property type="evidence" value="ECO:0007669"/>
    <property type="project" value="UniProtKB-KW"/>
</dbReference>
<dbReference type="CDD" id="cd00206">
    <property type="entry name" value="TFP_snake_toxin"/>
    <property type="match status" value="1"/>
</dbReference>
<dbReference type="Gene3D" id="2.10.60.10">
    <property type="entry name" value="CD59"/>
    <property type="match status" value="1"/>
</dbReference>
<dbReference type="InterPro" id="IPR003571">
    <property type="entry name" value="Snake_3FTx"/>
</dbReference>
<dbReference type="InterPro" id="IPR045860">
    <property type="entry name" value="Snake_toxin-like_sf"/>
</dbReference>
<dbReference type="InterPro" id="IPR018354">
    <property type="entry name" value="Snake_toxin_con_site"/>
</dbReference>
<dbReference type="InterPro" id="IPR054131">
    <property type="entry name" value="Toxin_cobra-type"/>
</dbReference>
<dbReference type="Pfam" id="PF21947">
    <property type="entry name" value="Toxin_cobra-type"/>
    <property type="match status" value="1"/>
</dbReference>
<dbReference type="SUPFAM" id="SSF57302">
    <property type="entry name" value="Snake toxin-like"/>
    <property type="match status" value="1"/>
</dbReference>
<dbReference type="PROSITE" id="PS00272">
    <property type="entry name" value="SNAKE_TOXIN"/>
    <property type="match status" value="1"/>
</dbReference>
<evidence type="ECO:0000250" key="1"/>
<evidence type="ECO:0000250" key="2">
    <source>
        <dbReference type="UniProtKB" id="P60615"/>
    </source>
</evidence>
<evidence type="ECO:0000269" key="3">
    <source>
    </source>
</evidence>
<evidence type="ECO:0000305" key="4"/>
<reference key="1">
    <citation type="journal article" date="2011" name="J. Proteome Res.">
        <title>Identification of novel proteins from the venom of a cryptic snake Drysdalia coronoides by a combined transcriptomics and proteomics approach.</title>
        <authorList>
            <person name="Chatrath S.T."/>
            <person name="Chapeaurouge A."/>
            <person name="Lin Q."/>
            <person name="Lim T.K."/>
            <person name="Dunstan N."/>
            <person name="Mirtschin P."/>
            <person name="Kumar P.P."/>
            <person name="Kini R.M."/>
        </authorList>
    </citation>
    <scope>NUCLEOTIDE SEQUENCE [MRNA]</scope>
    <scope>IDENTIFICATION BY MASS SPECTROMETRY</scope>
    <scope>SUBCELLULAR LOCATION</scope>
    <source>
        <tissue>Venom</tissue>
        <tissue>Venom gland</tissue>
    </source>
</reference>
<feature type="signal peptide" evidence="1">
    <location>
        <begin position="1"/>
        <end position="21"/>
    </location>
</feature>
<feature type="chain" id="PRO_0000425521" description="Long neurotoxin 20">
    <location>
        <begin position="22"/>
        <end position="88"/>
    </location>
</feature>
<feature type="disulfide bond" evidence="1">
    <location>
        <begin position="24"/>
        <end position="42"/>
    </location>
</feature>
<feature type="disulfide bond" evidence="1">
    <location>
        <begin position="35"/>
        <end position="63"/>
    </location>
</feature>
<feature type="disulfide bond" evidence="1">
    <location>
        <begin position="48"/>
        <end position="52"/>
    </location>
</feature>
<feature type="disulfide bond" evidence="1">
    <location>
        <begin position="67"/>
        <end position="78"/>
    </location>
</feature>
<feature type="disulfide bond" evidence="1">
    <location>
        <begin position="79"/>
        <end position="84"/>
    </location>
</feature>
<organism>
    <name type="scientific">Drysdalia coronoides</name>
    <name type="common">White-lipped snake</name>
    <name type="synonym">Hoplocephalus coronoides</name>
    <dbReference type="NCBI Taxonomy" id="66186"/>
    <lineage>
        <taxon>Eukaryota</taxon>
        <taxon>Metazoa</taxon>
        <taxon>Chordata</taxon>
        <taxon>Craniata</taxon>
        <taxon>Vertebrata</taxon>
        <taxon>Euteleostomi</taxon>
        <taxon>Lepidosauria</taxon>
        <taxon>Squamata</taxon>
        <taxon>Bifurcata</taxon>
        <taxon>Unidentata</taxon>
        <taxon>Episquamata</taxon>
        <taxon>Toxicofera</taxon>
        <taxon>Serpentes</taxon>
        <taxon>Colubroidea</taxon>
        <taxon>Elapidae</taxon>
        <taxon>Notechinae</taxon>
        <taxon>Drysdalia</taxon>
    </lineage>
</organism>
<comment type="function">
    <text evidence="2">Binds with high affinity to muscular (alpha-1/CHRNA1) and neuronal (alpha-7/CHRNA7) nicotinic acetylcholine receptor (nAChR) and inhibits acetylcholine from binding to the receptor, thereby impairing neuromuscular and neuronal transmission.</text>
</comment>
<comment type="subcellular location">
    <subcellularLocation>
        <location evidence="3">Secreted</location>
    </subcellularLocation>
</comment>
<comment type="tissue specificity">
    <text evidence="4">Expressed by the venom gland.</text>
</comment>
<comment type="similarity">
    <text evidence="4">Belongs to the three-finger toxin family. Long-chain subfamily. Type II alpha-neurotoxin sub-subfamily.</text>
</comment>